<dbReference type="EC" id="4.1.1.23" evidence="1"/>
<dbReference type="EMBL" id="BA000039">
    <property type="protein sequence ID" value="BAC07947.1"/>
    <property type="status" value="ALT_INIT"/>
    <property type="molecule type" value="Genomic_DNA"/>
</dbReference>
<dbReference type="RefSeq" id="NP_681185.1">
    <property type="nucleotide sequence ID" value="NC_004113.1"/>
</dbReference>
<dbReference type="RefSeq" id="WP_164920684.1">
    <property type="nucleotide sequence ID" value="NC_004113.1"/>
</dbReference>
<dbReference type="SMR" id="Q8DLT3"/>
<dbReference type="STRING" id="197221.gene:10746984"/>
<dbReference type="EnsemblBacteria" id="BAC07947">
    <property type="protein sequence ID" value="BAC07947"/>
    <property type="gene ID" value="BAC07947"/>
</dbReference>
<dbReference type="KEGG" id="tel:tll0395"/>
<dbReference type="PATRIC" id="fig|197221.4.peg.417"/>
<dbReference type="eggNOG" id="COG0284">
    <property type="taxonomic scope" value="Bacteria"/>
</dbReference>
<dbReference type="UniPathway" id="UPA00070">
    <property type="reaction ID" value="UER00120"/>
</dbReference>
<dbReference type="Proteomes" id="UP000000440">
    <property type="component" value="Chromosome"/>
</dbReference>
<dbReference type="GO" id="GO:0005829">
    <property type="term" value="C:cytosol"/>
    <property type="evidence" value="ECO:0007669"/>
    <property type="project" value="TreeGrafter"/>
</dbReference>
<dbReference type="GO" id="GO:0004590">
    <property type="term" value="F:orotidine-5'-phosphate decarboxylase activity"/>
    <property type="evidence" value="ECO:0007669"/>
    <property type="project" value="UniProtKB-UniRule"/>
</dbReference>
<dbReference type="GO" id="GO:0006207">
    <property type="term" value="P:'de novo' pyrimidine nucleobase biosynthetic process"/>
    <property type="evidence" value="ECO:0007669"/>
    <property type="project" value="InterPro"/>
</dbReference>
<dbReference type="GO" id="GO:0044205">
    <property type="term" value="P:'de novo' UMP biosynthetic process"/>
    <property type="evidence" value="ECO:0007669"/>
    <property type="project" value="UniProtKB-UniRule"/>
</dbReference>
<dbReference type="CDD" id="cd04725">
    <property type="entry name" value="OMP_decarboxylase_like"/>
    <property type="match status" value="1"/>
</dbReference>
<dbReference type="FunFam" id="3.20.20.70:FF:000015">
    <property type="entry name" value="Orotidine 5'-phosphate decarboxylase"/>
    <property type="match status" value="1"/>
</dbReference>
<dbReference type="Gene3D" id="3.20.20.70">
    <property type="entry name" value="Aldolase class I"/>
    <property type="match status" value="1"/>
</dbReference>
<dbReference type="HAMAP" id="MF_01200_B">
    <property type="entry name" value="OMPdecase_type1_B"/>
    <property type="match status" value="1"/>
</dbReference>
<dbReference type="InterPro" id="IPR013785">
    <property type="entry name" value="Aldolase_TIM"/>
</dbReference>
<dbReference type="InterPro" id="IPR014732">
    <property type="entry name" value="OMPdecase"/>
</dbReference>
<dbReference type="InterPro" id="IPR018089">
    <property type="entry name" value="OMPdecase_AS"/>
</dbReference>
<dbReference type="InterPro" id="IPR047596">
    <property type="entry name" value="OMPdecase_bac"/>
</dbReference>
<dbReference type="InterPro" id="IPR001754">
    <property type="entry name" value="OMPdeCOase_dom"/>
</dbReference>
<dbReference type="InterPro" id="IPR011060">
    <property type="entry name" value="RibuloseP-bd_barrel"/>
</dbReference>
<dbReference type="NCBIfam" id="NF001273">
    <property type="entry name" value="PRK00230.1"/>
    <property type="match status" value="1"/>
</dbReference>
<dbReference type="NCBIfam" id="TIGR01740">
    <property type="entry name" value="pyrF"/>
    <property type="match status" value="1"/>
</dbReference>
<dbReference type="PANTHER" id="PTHR32119">
    <property type="entry name" value="OROTIDINE 5'-PHOSPHATE DECARBOXYLASE"/>
    <property type="match status" value="1"/>
</dbReference>
<dbReference type="PANTHER" id="PTHR32119:SF2">
    <property type="entry name" value="OROTIDINE 5'-PHOSPHATE DECARBOXYLASE"/>
    <property type="match status" value="1"/>
</dbReference>
<dbReference type="Pfam" id="PF00215">
    <property type="entry name" value="OMPdecase"/>
    <property type="match status" value="1"/>
</dbReference>
<dbReference type="SMART" id="SM00934">
    <property type="entry name" value="OMPdecase"/>
    <property type="match status" value="1"/>
</dbReference>
<dbReference type="SUPFAM" id="SSF51366">
    <property type="entry name" value="Ribulose-phoshate binding barrel"/>
    <property type="match status" value="1"/>
</dbReference>
<dbReference type="PROSITE" id="PS00156">
    <property type="entry name" value="OMPDECASE"/>
    <property type="match status" value="1"/>
</dbReference>
<proteinExistence type="inferred from homology"/>
<evidence type="ECO:0000255" key="1">
    <source>
        <dbReference type="HAMAP-Rule" id="MF_01200"/>
    </source>
</evidence>
<evidence type="ECO:0000305" key="2"/>
<comment type="function">
    <text evidence="1">Catalyzes the decarboxylation of orotidine 5'-monophosphate (OMP) to uridine 5'-monophosphate (UMP).</text>
</comment>
<comment type="catalytic activity">
    <reaction evidence="1">
        <text>orotidine 5'-phosphate + H(+) = UMP + CO2</text>
        <dbReference type="Rhea" id="RHEA:11596"/>
        <dbReference type="ChEBI" id="CHEBI:15378"/>
        <dbReference type="ChEBI" id="CHEBI:16526"/>
        <dbReference type="ChEBI" id="CHEBI:57538"/>
        <dbReference type="ChEBI" id="CHEBI:57865"/>
        <dbReference type="EC" id="4.1.1.23"/>
    </reaction>
</comment>
<comment type="pathway">
    <text evidence="1">Pyrimidine metabolism; UMP biosynthesis via de novo pathway; UMP from orotate: step 2/2.</text>
</comment>
<comment type="subunit">
    <text evidence="1">Homodimer.</text>
</comment>
<comment type="similarity">
    <text evidence="1">Belongs to the OMP decarboxylase family. Type 1 subfamily.</text>
</comment>
<comment type="sequence caution" evidence="2">
    <conflict type="erroneous initiation">
        <sequence resource="EMBL-CDS" id="BAC07947"/>
    </conflict>
</comment>
<organism>
    <name type="scientific">Thermosynechococcus vestitus (strain NIES-2133 / IAM M-273 / BP-1)</name>
    <dbReference type="NCBI Taxonomy" id="197221"/>
    <lineage>
        <taxon>Bacteria</taxon>
        <taxon>Bacillati</taxon>
        <taxon>Cyanobacteriota</taxon>
        <taxon>Cyanophyceae</taxon>
        <taxon>Acaryochloridales</taxon>
        <taxon>Thermosynechococcaceae</taxon>
        <taxon>Thermosynechococcus</taxon>
    </lineage>
</organism>
<name>PYRF_THEVB</name>
<protein>
    <recommendedName>
        <fullName evidence="1">Orotidine 5'-phosphate decarboxylase</fullName>
        <ecNumber evidence="1">4.1.1.23</ecNumber>
    </recommendedName>
    <alternativeName>
        <fullName evidence="1">OMP decarboxylase</fullName>
        <shortName evidence="1">OMPDCase</shortName>
        <shortName evidence="1">OMPdecase</shortName>
    </alternativeName>
</protein>
<accession>Q8DLT3</accession>
<gene>
    <name evidence="1" type="primary">pyrF</name>
    <name type="ordered locus">tll0395</name>
</gene>
<feature type="chain" id="PRO_0000241916" description="Orotidine 5'-phosphate decarboxylase">
    <location>
        <begin position="1"/>
        <end position="234"/>
    </location>
</feature>
<feature type="active site" description="Proton donor" evidence="1">
    <location>
        <position position="67"/>
    </location>
</feature>
<feature type="binding site" evidence="1">
    <location>
        <position position="17"/>
    </location>
    <ligand>
        <name>substrate</name>
    </ligand>
</feature>
<feature type="binding site" evidence="1">
    <location>
        <position position="38"/>
    </location>
    <ligand>
        <name>substrate</name>
    </ligand>
</feature>
<feature type="binding site" evidence="1">
    <location>
        <begin position="65"/>
        <end position="74"/>
    </location>
    <ligand>
        <name>substrate</name>
    </ligand>
</feature>
<feature type="binding site" evidence="1">
    <location>
        <position position="122"/>
    </location>
    <ligand>
        <name>substrate</name>
    </ligand>
</feature>
<feature type="binding site" evidence="1">
    <location>
        <position position="184"/>
    </location>
    <ligand>
        <name>substrate</name>
    </ligand>
</feature>
<feature type="binding site" evidence="1">
    <location>
        <position position="193"/>
    </location>
    <ligand>
        <name>substrate</name>
    </ligand>
</feature>
<feature type="binding site" evidence="1">
    <location>
        <position position="213"/>
    </location>
    <ligand>
        <name>substrate</name>
    </ligand>
</feature>
<feature type="binding site" evidence="1">
    <location>
        <position position="214"/>
    </location>
    <ligand>
        <name>substrate</name>
    </ligand>
</feature>
<keyword id="KW-0210">Decarboxylase</keyword>
<keyword id="KW-0456">Lyase</keyword>
<keyword id="KW-0665">Pyrimidine biosynthesis</keyword>
<keyword id="KW-1185">Reference proteome</keyword>
<sequence length="234" mass="24566">MFNSQAAVASKIIVALDVPNLEVAIATIHRLPQVQFWKVGLELFCASGPMILDVLKDQGKRIFLDLKLHDIPNTVAAAARAIAPYGVDFVTIHTATGLTGLKTAQAALGESATQLIGVTLLTSIGADTLQQELQIPLDPATYVECMANLAHQAGLAGIVCSPQEAARVKQRWGENFLRICPGIRPLGSATGDQARSLTPNAAFAAGASYLVIGRPILQAADPAAAFDDLCSSLV</sequence>
<reference key="1">
    <citation type="journal article" date="2002" name="DNA Res.">
        <title>Complete genome structure of the thermophilic cyanobacterium Thermosynechococcus elongatus BP-1.</title>
        <authorList>
            <person name="Nakamura Y."/>
            <person name="Kaneko T."/>
            <person name="Sato S."/>
            <person name="Ikeuchi M."/>
            <person name="Katoh H."/>
            <person name="Sasamoto S."/>
            <person name="Watanabe A."/>
            <person name="Iriguchi M."/>
            <person name="Kawashima K."/>
            <person name="Kimura T."/>
            <person name="Kishida Y."/>
            <person name="Kiyokawa C."/>
            <person name="Kohara M."/>
            <person name="Matsumoto M."/>
            <person name="Matsuno A."/>
            <person name="Nakazaki N."/>
            <person name="Shimpo S."/>
            <person name="Sugimoto M."/>
            <person name="Takeuchi C."/>
            <person name="Yamada M."/>
            <person name="Tabata S."/>
        </authorList>
    </citation>
    <scope>NUCLEOTIDE SEQUENCE [LARGE SCALE GENOMIC DNA]</scope>
    <source>
        <strain>NIES-2133 / IAM M-273 / BP-1</strain>
    </source>
</reference>